<feature type="chain" id="PRO_0000103488" description="Dihydroxy-acid dehydratase">
    <location>
        <begin position="1"/>
        <end position="616"/>
    </location>
</feature>
<feature type="active site" description="Proton acceptor" evidence="1">
    <location>
        <position position="517"/>
    </location>
</feature>
<feature type="binding site" evidence="1">
    <location>
        <position position="81"/>
    </location>
    <ligand>
        <name>Mg(2+)</name>
        <dbReference type="ChEBI" id="CHEBI:18420"/>
    </ligand>
</feature>
<feature type="binding site" evidence="1">
    <location>
        <position position="122"/>
    </location>
    <ligand>
        <name>[2Fe-2S] cluster</name>
        <dbReference type="ChEBI" id="CHEBI:190135"/>
    </ligand>
</feature>
<feature type="binding site" evidence="1">
    <location>
        <position position="123"/>
    </location>
    <ligand>
        <name>Mg(2+)</name>
        <dbReference type="ChEBI" id="CHEBI:18420"/>
    </ligand>
</feature>
<feature type="binding site" description="via carbamate group" evidence="1">
    <location>
        <position position="124"/>
    </location>
    <ligand>
        <name>Mg(2+)</name>
        <dbReference type="ChEBI" id="CHEBI:18420"/>
    </ligand>
</feature>
<feature type="binding site" evidence="1">
    <location>
        <position position="195"/>
    </location>
    <ligand>
        <name>[2Fe-2S] cluster</name>
        <dbReference type="ChEBI" id="CHEBI:190135"/>
    </ligand>
</feature>
<feature type="binding site" evidence="1">
    <location>
        <position position="491"/>
    </location>
    <ligand>
        <name>Mg(2+)</name>
        <dbReference type="ChEBI" id="CHEBI:18420"/>
    </ligand>
</feature>
<feature type="modified residue" description="N6-carboxylysine" evidence="1">
    <location>
        <position position="124"/>
    </location>
</feature>
<proteinExistence type="inferred from homology"/>
<organism>
    <name type="scientific">Photorhabdus laumondii subsp. laumondii (strain DSM 15139 / CIP 105565 / TT01)</name>
    <name type="common">Photorhabdus luminescens subsp. laumondii</name>
    <dbReference type="NCBI Taxonomy" id="243265"/>
    <lineage>
        <taxon>Bacteria</taxon>
        <taxon>Pseudomonadati</taxon>
        <taxon>Pseudomonadota</taxon>
        <taxon>Gammaproteobacteria</taxon>
        <taxon>Enterobacterales</taxon>
        <taxon>Morganellaceae</taxon>
        <taxon>Photorhabdus</taxon>
    </lineage>
</organism>
<comment type="function">
    <text evidence="1">Functions in the biosynthesis of branched-chain amino acids. Catalyzes the dehydration of (2R,3R)-2,3-dihydroxy-3-methylpentanoate (2,3-dihydroxy-3-methylvalerate) into 2-oxo-3-methylpentanoate (2-oxo-3-methylvalerate) and of (2R)-2,3-dihydroxy-3-methylbutanoate (2,3-dihydroxyisovalerate) into 2-oxo-3-methylbutanoate (2-oxoisovalerate), the penultimate precursor to L-isoleucine and L-valine, respectively.</text>
</comment>
<comment type="catalytic activity">
    <reaction evidence="1">
        <text>(2R)-2,3-dihydroxy-3-methylbutanoate = 3-methyl-2-oxobutanoate + H2O</text>
        <dbReference type="Rhea" id="RHEA:24809"/>
        <dbReference type="ChEBI" id="CHEBI:11851"/>
        <dbReference type="ChEBI" id="CHEBI:15377"/>
        <dbReference type="ChEBI" id="CHEBI:49072"/>
        <dbReference type="EC" id="4.2.1.9"/>
    </reaction>
    <physiologicalReaction direction="left-to-right" evidence="1">
        <dbReference type="Rhea" id="RHEA:24810"/>
    </physiologicalReaction>
</comment>
<comment type="catalytic activity">
    <reaction evidence="1">
        <text>(2R,3R)-2,3-dihydroxy-3-methylpentanoate = (S)-3-methyl-2-oxopentanoate + H2O</text>
        <dbReference type="Rhea" id="RHEA:27694"/>
        <dbReference type="ChEBI" id="CHEBI:15377"/>
        <dbReference type="ChEBI" id="CHEBI:35146"/>
        <dbReference type="ChEBI" id="CHEBI:49258"/>
        <dbReference type="EC" id="4.2.1.9"/>
    </reaction>
    <physiologicalReaction direction="left-to-right" evidence="1">
        <dbReference type="Rhea" id="RHEA:27695"/>
    </physiologicalReaction>
</comment>
<comment type="cofactor">
    <cofactor evidence="1">
        <name>[2Fe-2S] cluster</name>
        <dbReference type="ChEBI" id="CHEBI:190135"/>
    </cofactor>
    <text evidence="1">Binds 1 [2Fe-2S] cluster per subunit. This cluster acts as a Lewis acid cofactor.</text>
</comment>
<comment type="cofactor">
    <cofactor evidence="1">
        <name>Mg(2+)</name>
        <dbReference type="ChEBI" id="CHEBI:18420"/>
    </cofactor>
</comment>
<comment type="pathway">
    <text evidence="1">Amino-acid biosynthesis; L-isoleucine biosynthesis; L-isoleucine from 2-oxobutanoate: step 3/4.</text>
</comment>
<comment type="pathway">
    <text evidence="1">Amino-acid biosynthesis; L-valine biosynthesis; L-valine from pyruvate: step 3/4.</text>
</comment>
<comment type="subunit">
    <text evidence="1">Homodimer.</text>
</comment>
<comment type="similarity">
    <text evidence="1">Belongs to the IlvD/Edd family.</text>
</comment>
<keyword id="KW-0001">2Fe-2S</keyword>
<keyword id="KW-0028">Amino-acid biosynthesis</keyword>
<keyword id="KW-0100">Branched-chain amino acid biosynthesis</keyword>
<keyword id="KW-0408">Iron</keyword>
<keyword id="KW-0411">Iron-sulfur</keyword>
<keyword id="KW-0456">Lyase</keyword>
<keyword id="KW-0460">Magnesium</keyword>
<keyword id="KW-0479">Metal-binding</keyword>
<keyword id="KW-1185">Reference proteome</keyword>
<dbReference type="EC" id="4.2.1.9" evidence="1"/>
<dbReference type="EMBL" id="BX571874">
    <property type="protein sequence ID" value="CAE17054.1"/>
    <property type="molecule type" value="Genomic_DNA"/>
</dbReference>
<dbReference type="RefSeq" id="WP_011148752.1">
    <property type="nucleotide sequence ID" value="NC_005126.1"/>
</dbReference>
<dbReference type="SMR" id="Q7MYJ5"/>
<dbReference type="STRING" id="243265.plu4682"/>
<dbReference type="GeneID" id="48850899"/>
<dbReference type="KEGG" id="plu:plu4682"/>
<dbReference type="eggNOG" id="COG0129">
    <property type="taxonomic scope" value="Bacteria"/>
</dbReference>
<dbReference type="HOGENOM" id="CLU_014271_4_3_6"/>
<dbReference type="OrthoDB" id="9807077at2"/>
<dbReference type="UniPathway" id="UPA00047">
    <property type="reaction ID" value="UER00057"/>
</dbReference>
<dbReference type="UniPathway" id="UPA00049">
    <property type="reaction ID" value="UER00061"/>
</dbReference>
<dbReference type="Proteomes" id="UP000002514">
    <property type="component" value="Chromosome"/>
</dbReference>
<dbReference type="GO" id="GO:0005829">
    <property type="term" value="C:cytosol"/>
    <property type="evidence" value="ECO:0007669"/>
    <property type="project" value="TreeGrafter"/>
</dbReference>
<dbReference type="GO" id="GO:0051537">
    <property type="term" value="F:2 iron, 2 sulfur cluster binding"/>
    <property type="evidence" value="ECO:0007669"/>
    <property type="project" value="UniProtKB-UniRule"/>
</dbReference>
<dbReference type="GO" id="GO:0004160">
    <property type="term" value="F:dihydroxy-acid dehydratase activity"/>
    <property type="evidence" value="ECO:0007669"/>
    <property type="project" value="UniProtKB-UniRule"/>
</dbReference>
<dbReference type="GO" id="GO:0000287">
    <property type="term" value="F:magnesium ion binding"/>
    <property type="evidence" value="ECO:0007669"/>
    <property type="project" value="UniProtKB-UniRule"/>
</dbReference>
<dbReference type="GO" id="GO:0009097">
    <property type="term" value="P:isoleucine biosynthetic process"/>
    <property type="evidence" value="ECO:0007669"/>
    <property type="project" value="UniProtKB-UniRule"/>
</dbReference>
<dbReference type="GO" id="GO:0009099">
    <property type="term" value="P:L-valine biosynthetic process"/>
    <property type="evidence" value="ECO:0007669"/>
    <property type="project" value="UniProtKB-UniRule"/>
</dbReference>
<dbReference type="FunFam" id="3.50.30.80:FF:000001">
    <property type="entry name" value="Dihydroxy-acid dehydratase"/>
    <property type="match status" value="1"/>
</dbReference>
<dbReference type="Gene3D" id="3.50.30.80">
    <property type="entry name" value="IlvD/EDD C-terminal domain-like"/>
    <property type="match status" value="1"/>
</dbReference>
<dbReference type="HAMAP" id="MF_00012">
    <property type="entry name" value="IlvD"/>
    <property type="match status" value="1"/>
</dbReference>
<dbReference type="InterPro" id="IPR042096">
    <property type="entry name" value="Dihydro-acid_dehy_C"/>
</dbReference>
<dbReference type="InterPro" id="IPR004404">
    <property type="entry name" value="DihydroxyA_deHydtase"/>
</dbReference>
<dbReference type="InterPro" id="IPR020558">
    <property type="entry name" value="DiOHA_6PGluconate_deHydtase_CS"/>
</dbReference>
<dbReference type="InterPro" id="IPR056740">
    <property type="entry name" value="ILV_EDD_C"/>
</dbReference>
<dbReference type="InterPro" id="IPR000581">
    <property type="entry name" value="ILV_EDD_N"/>
</dbReference>
<dbReference type="InterPro" id="IPR037237">
    <property type="entry name" value="IlvD/EDD_N"/>
</dbReference>
<dbReference type="NCBIfam" id="TIGR00110">
    <property type="entry name" value="ilvD"/>
    <property type="match status" value="1"/>
</dbReference>
<dbReference type="NCBIfam" id="NF009103">
    <property type="entry name" value="PRK12448.1"/>
    <property type="match status" value="1"/>
</dbReference>
<dbReference type="PANTHER" id="PTHR43661">
    <property type="entry name" value="D-XYLONATE DEHYDRATASE"/>
    <property type="match status" value="1"/>
</dbReference>
<dbReference type="PANTHER" id="PTHR43661:SF3">
    <property type="entry name" value="D-XYLONATE DEHYDRATASE YAGF-RELATED"/>
    <property type="match status" value="1"/>
</dbReference>
<dbReference type="Pfam" id="PF24877">
    <property type="entry name" value="ILV_EDD_C"/>
    <property type="match status" value="1"/>
</dbReference>
<dbReference type="Pfam" id="PF00920">
    <property type="entry name" value="ILVD_EDD_N"/>
    <property type="match status" value="1"/>
</dbReference>
<dbReference type="SUPFAM" id="SSF143975">
    <property type="entry name" value="IlvD/EDD N-terminal domain-like"/>
    <property type="match status" value="1"/>
</dbReference>
<dbReference type="SUPFAM" id="SSF52016">
    <property type="entry name" value="LeuD/IlvD-like"/>
    <property type="match status" value="1"/>
</dbReference>
<dbReference type="PROSITE" id="PS00886">
    <property type="entry name" value="ILVD_EDD_1"/>
    <property type="match status" value="1"/>
</dbReference>
<dbReference type="PROSITE" id="PS00887">
    <property type="entry name" value="ILVD_EDD_2"/>
    <property type="match status" value="1"/>
</dbReference>
<accession>Q7MYJ5</accession>
<evidence type="ECO:0000255" key="1">
    <source>
        <dbReference type="HAMAP-Rule" id="MF_00012"/>
    </source>
</evidence>
<sequence>MPKYRSATTTHGRNMAGARALWRATGMTDADFGKPIIAVVNSFTQFVPGHVHLRDLGKLVAEQIEASGGVAKEFNTIAVDDGIAMGHGGMLYSLPSRELIADSVEYMVNAHCADAMVCISNCDKITPGMLMAALRLNIPAIFVSGGPMEAGKTKLSDQIIKLDLIDAMIQGANPKVSDEDSNQIERSACPTCGSCSGMFTANSMNCLTEALGLSQPGNGSLLATHADRKALFLNAGKRIVELTKRYYEQNDDSALPRSIATKAAFENAMMLDIAMGGSTNTVLHLLAAAQEGEVDFTMADIDRLSRQIPHLCKVAPSTQKYHMEDVHRAGGVIGILGELDRAGLLNRQVKNVLGLDLLQTLNQYDVMQTVDESVKEMYSAGPAGIRTTQAFSQDCRWPSLDTDRVEGCIRDIEHAYSRDGGLAVLFGNLAIDGCIVKTAGVDEGSLTFRGPAKVYESQEDAVDAILGGKVVAGDVVVIRYEGPKGGPGMQEMLYPTTYLKSVGLGKSCALITDGRFSGGTSGLSIGHVSPEAANGGLIGLVQDGDIIDIDIPLRKIRLDVDERILATRKEVEFARGDKSWTPKARERQVSLALRAYASLATSADKGAVRDKSKLGG</sequence>
<gene>
    <name evidence="1" type="primary">ilvD</name>
    <name type="ordered locus">plu4682</name>
</gene>
<name>ILVD_PHOLL</name>
<reference key="1">
    <citation type="journal article" date="2003" name="Nat. Biotechnol.">
        <title>The genome sequence of the entomopathogenic bacterium Photorhabdus luminescens.</title>
        <authorList>
            <person name="Duchaud E."/>
            <person name="Rusniok C."/>
            <person name="Frangeul L."/>
            <person name="Buchrieser C."/>
            <person name="Givaudan A."/>
            <person name="Taourit S."/>
            <person name="Bocs S."/>
            <person name="Boursaux-Eude C."/>
            <person name="Chandler M."/>
            <person name="Charles J.-F."/>
            <person name="Dassa E."/>
            <person name="Derose R."/>
            <person name="Derzelle S."/>
            <person name="Freyssinet G."/>
            <person name="Gaudriault S."/>
            <person name="Medigue C."/>
            <person name="Lanois A."/>
            <person name="Powell K."/>
            <person name="Siguier P."/>
            <person name="Vincent R."/>
            <person name="Wingate V."/>
            <person name="Zouine M."/>
            <person name="Glaser P."/>
            <person name="Boemare N."/>
            <person name="Danchin A."/>
            <person name="Kunst F."/>
        </authorList>
    </citation>
    <scope>NUCLEOTIDE SEQUENCE [LARGE SCALE GENOMIC DNA]</scope>
    <source>
        <strain>DSM 15139 / CIP 105565 / TT01</strain>
    </source>
</reference>
<protein>
    <recommendedName>
        <fullName evidence="1">Dihydroxy-acid dehydratase</fullName>
        <shortName evidence="1">DAD</shortName>
        <ecNumber evidence="1">4.2.1.9</ecNumber>
    </recommendedName>
</protein>